<keyword id="KW-1185">Reference proteome</keyword>
<keyword id="KW-0687">Ribonucleoprotein</keyword>
<keyword id="KW-0689">Ribosomal protein</keyword>
<keyword id="KW-0694">RNA-binding</keyword>
<keyword id="KW-0699">rRNA-binding</keyword>
<accession>P0A7V5</accession>
<accession>P02352</accession>
<sequence>MGQKVHPNGIRLGIVKPWNSTWFANTKEFADNLDSDFKVRQYLTKELAKASVSRIVIERPAKSIRVTIHTARPGIVIGKKGEDVEKLRKVVADIAGVPAQINIAEVRKPELDAKLVADSITSQLERRVMFRRAMKRAVQNAMRLGAKGIKVEVSGRLGGAEIARTEWYREGRVPLHTLRADIDYNTSEAHTTYGVIGVKVWIFKGEILGGMAAVEQPEKPAAQPKKQQRKGRK</sequence>
<evidence type="ECO:0000250" key="1"/>
<evidence type="ECO:0000305" key="2"/>
<comment type="function">
    <text evidence="1">Binds the lower part of the 30S subunit head. Binds mRNA in the 70S ribosome, positioning it for translation (By similarity).</text>
</comment>
<comment type="subunit">
    <text evidence="1">Part of the 30S ribosomal subunit. Forms a tight complex with proteins S10 and S14. Some nascent polypeptide chains are able to cross-link to this protein in situ (By similarity).</text>
</comment>
<comment type="similarity">
    <text evidence="2">Belongs to the universal ribosomal protein uS3 family.</text>
</comment>
<protein>
    <recommendedName>
        <fullName evidence="2">Small ribosomal subunit protein uS3</fullName>
    </recommendedName>
    <alternativeName>
        <fullName>30S ribosomal protein S3</fullName>
    </alternativeName>
</protein>
<name>RS3_ECO57</name>
<feature type="initiator methionine" description="Removed" evidence="1">
    <location>
        <position position="1"/>
    </location>
</feature>
<feature type="chain" id="PRO_0000130115" description="Small ribosomal subunit protein uS3">
    <location>
        <begin position="2"/>
        <end position="233"/>
    </location>
</feature>
<feature type="domain" description="KH type-2">
    <location>
        <begin position="39"/>
        <end position="107"/>
    </location>
</feature>
<dbReference type="EMBL" id="AE005174">
    <property type="protein sequence ID" value="AAG58435.1"/>
    <property type="molecule type" value="Genomic_DNA"/>
</dbReference>
<dbReference type="EMBL" id="BA000007">
    <property type="protein sequence ID" value="BAB37602.1"/>
    <property type="molecule type" value="Genomic_DNA"/>
</dbReference>
<dbReference type="PIR" id="C91151">
    <property type="entry name" value="C91151"/>
</dbReference>
<dbReference type="RefSeq" id="NP_312206.1">
    <property type="nucleotide sequence ID" value="NC_002695.1"/>
</dbReference>
<dbReference type="RefSeq" id="WP_000529945.1">
    <property type="nucleotide sequence ID" value="NZ_VOAI01000041.1"/>
</dbReference>
<dbReference type="EMDB" id="EMD-43930"/>
<dbReference type="SMR" id="P0A7V5"/>
<dbReference type="STRING" id="155864.Z4685"/>
<dbReference type="GeneID" id="915969"/>
<dbReference type="GeneID" id="97603663"/>
<dbReference type="KEGG" id="ece:Z4685"/>
<dbReference type="KEGG" id="ecs:ECs_4179"/>
<dbReference type="PATRIC" id="fig|386585.9.peg.4362"/>
<dbReference type="eggNOG" id="COG0092">
    <property type="taxonomic scope" value="Bacteria"/>
</dbReference>
<dbReference type="HOGENOM" id="CLU_058591_0_2_6"/>
<dbReference type="OMA" id="KTNPIGN"/>
<dbReference type="Proteomes" id="UP000000558">
    <property type="component" value="Chromosome"/>
</dbReference>
<dbReference type="Proteomes" id="UP000002519">
    <property type="component" value="Chromosome"/>
</dbReference>
<dbReference type="GO" id="GO:0022627">
    <property type="term" value="C:cytosolic small ribosomal subunit"/>
    <property type="evidence" value="ECO:0007669"/>
    <property type="project" value="TreeGrafter"/>
</dbReference>
<dbReference type="GO" id="GO:0003729">
    <property type="term" value="F:mRNA binding"/>
    <property type="evidence" value="ECO:0007669"/>
    <property type="project" value="UniProtKB-UniRule"/>
</dbReference>
<dbReference type="GO" id="GO:0019843">
    <property type="term" value="F:rRNA binding"/>
    <property type="evidence" value="ECO:0007669"/>
    <property type="project" value="UniProtKB-UniRule"/>
</dbReference>
<dbReference type="GO" id="GO:0003735">
    <property type="term" value="F:structural constituent of ribosome"/>
    <property type="evidence" value="ECO:0007669"/>
    <property type="project" value="InterPro"/>
</dbReference>
<dbReference type="GO" id="GO:0006412">
    <property type="term" value="P:translation"/>
    <property type="evidence" value="ECO:0007669"/>
    <property type="project" value="UniProtKB-UniRule"/>
</dbReference>
<dbReference type="CDD" id="cd02412">
    <property type="entry name" value="KH-II_30S_S3"/>
    <property type="match status" value="1"/>
</dbReference>
<dbReference type="FunFam" id="3.30.1140.32:FF:000001">
    <property type="entry name" value="30S ribosomal protein S3"/>
    <property type="match status" value="1"/>
</dbReference>
<dbReference type="FunFam" id="3.30.300.20:FF:000001">
    <property type="entry name" value="30S ribosomal protein S3"/>
    <property type="match status" value="1"/>
</dbReference>
<dbReference type="Gene3D" id="3.30.300.20">
    <property type="match status" value="1"/>
</dbReference>
<dbReference type="Gene3D" id="3.30.1140.32">
    <property type="entry name" value="Ribosomal protein S3, C-terminal domain"/>
    <property type="match status" value="1"/>
</dbReference>
<dbReference type="HAMAP" id="MF_01309_B">
    <property type="entry name" value="Ribosomal_uS3_B"/>
    <property type="match status" value="1"/>
</dbReference>
<dbReference type="InterPro" id="IPR004087">
    <property type="entry name" value="KH_dom"/>
</dbReference>
<dbReference type="InterPro" id="IPR015946">
    <property type="entry name" value="KH_dom-like_a/b"/>
</dbReference>
<dbReference type="InterPro" id="IPR004044">
    <property type="entry name" value="KH_dom_type_2"/>
</dbReference>
<dbReference type="InterPro" id="IPR009019">
    <property type="entry name" value="KH_sf_prok-type"/>
</dbReference>
<dbReference type="InterPro" id="IPR036419">
    <property type="entry name" value="Ribosomal_S3_C_sf"/>
</dbReference>
<dbReference type="InterPro" id="IPR005704">
    <property type="entry name" value="Ribosomal_uS3_bac-typ"/>
</dbReference>
<dbReference type="InterPro" id="IPR001351">
    <property type="entry name" value="Ribosomal_uS3_C"/>
</dbReference>
<dbReference type="InterPro" id="IPR018280">
    <property type="entry name" value="Ribosomal_uS3_CS"/>
</dbReference>
<dbReference type="NCBIfam" id="TIGR01009">
    <property type="entry name" value="rpsC_bact"/>
    <property type="match status" value="1"/>
</dbReference>
<dbReference type="PANTHER" id="PTHR11760">
    <property type="entry name" value="30S/40S RIBOSOMAL PROTEIN S3"/>
    <property type="match status" value="1"/>
</dbReference>
<dbReference type="PANTHER" id="PTHR11760:SF19">
    <property type="entry name" value="SMALL RIBOSOMAL SUBUNIT PROTEIN US3C"/>
    <property type="match status" value="1"/>
</dbReference>
<dbReference type="Pfam" id="PF07650">
    <property type="entry name" value="KH_2"/>
    <property type="match status" value="1"/>
</dbReference>
<dbReference type="Pfam" id="PF00189">
    <property type="entry name" value="Ribosomal_S3_C"/>
    <property type="match status" value="1"/>
</dbReference>
<dbReference type="SMART" id="SM00322">
    <property type="entry name" value="KH"/>
    <property type="match status" value="1"/>
</dbReference>
<dbReference type="SUPFAM" id="SSF54814">
    <property type="entry name" value="Prokaryotic type KH domain (KH-domain type II)"/>
    <property type="match status" value="1"/>
</dbReference>
<dbReference type="SUPFAM" id="SSF54821">
    <property type="entry name" value="Ribosomal protein S3 C-terminal domain"/>
    <property type="match status" value="1"/>
</dbReference>
<dbReference type="PROSITE" id="PS50823">
    <property type="entry name" value="KH_TYPE_2"/>
    <property type="match status" value="1"/>
</dbReference>
<dbReference type="PROSITE" id="PS00548">
    <property type="entry name" value="RIBOSOMAL_S3"/>
    <property type="match status" value="1"/>
</dbReference>
<organism>
    <name type="scientific">Escherichia coli O157:H7</name>
    <dbReference type="NCBI Taxonomy" id="83334"/>
    <lineage>
        <taxon>Bacteria</taxon>
        <taxon>Pseudomonadati</taxon>
        <taxon>Pseudomonadota</taxon>
        <taxon>Gammaproteobacteria</taxon>
        <taxon>Enterobacterales</taxon>
        <taxon>Enterobacteriaceae</taxon>
        <taxon>Escherichia</taxon>
    </lineage>
</organism>
<gene>
    <name type="primary">rpsC</name>
    <name type="ordered locus">Z4685</name>
    <name type="ordered locus">ECs4179</name>
</gene>
<proteinExistence type="inferred from homology"/>
<reference key="1">
    <citation type="journal article" date="2001" name="Nature">
        <title>Genome sequence of enterohaemorrhagic Escherichia coli O157:H7.</title>
        <authorList>
            <person name="Perna N.T."/>
            <person name="Plunkett G. III"/>
            <person name="Burland V."/>
            <person name="Mau B."/>
            <person name="Glasner J.D."/>
            <person name="Rose D.J."/>
            <person name="Mayhew G.F."/>
            <person name="Evans P.S."/>
            <person name="Gregor J."/>
            <person name="Kirkpatrick H.A."/>
            <person name="Posfai G."/>
            <person name="Hackett J."/>
            <person name="Klink S."/>
            <person name="Boutin A."/>
            <person name="Shao Y."/>
            <person name="Miller L."/>
            <person name="Grotbeck E.J."/>
            <person name="Davis N.W."/>
            <person name="Lim A."/>
            <person name="Dimalanta E.T."/>
            <person name="Potamousis K."/>
            <person name="Apodaca J."/>
            <person name="Anantharaman T.S."/>
            <person name="Lin J."/>
            <person name="Yen G."/>
            <person name="Schwartz D.C."/>
            <person name="Welch R.A."/>
            <person name="Blattner F.R."/>
        </authorList>
    </citation>
    <scope>NUCLEOTIDE SEQUENCE [LARGE SCALE GENOMIC DNA]</scope>
    <source>
        <strain>O157:H7 / EDL933 / ATCC 700927 / EHEC</strain>
    </source>
</reference>
<reference key="2">
    <citation type="journal article" date="2001" name="DNA Res.">
        <title>Complete genome sequence of enterohemorrhagic Escherichia coli O157:H7 and genomic comparison with a laboratory strain K-12.</title>
        <authorList>
            <person name="Hayashi T."/>
            <person name="Makino K."/>
            <person name="Ohnishi M."/>
            <person name="Kurokawa K."/>
            <person name="Ishii K."/>
            <person name="Yokoyama K."/>
            <person name="Han C.-G."/>
            <person name="Ohtsubo E."/>
            <person name="Nakayama K."/>
            <person name="Murata T."/>
            <person name="Tanaka M."/>
            <person name="Tobe T."/>
            <person name="Iida T."/>
            <person name="Takami H."/>
            <person name="Honda T."/>
            <person name="Sasakawa C."/>
            <person name="Ogasawara N."/>
            <person name="Yasunaga T."/>
            <person name="Kuhara S."/>
            <person name="Shiba T."/>
            <person name="Hattori M."/>
            <person name="Shinagawa H."/>
        </authorList>
    </citation>
    <scope>NUCLEOTIDE SEQUENCE [LARGE SCALE GENOMIC DNA]</scope>
    <source>
        <strain>O157:H7 / Sakai / RIMD 0509952 / EHEC</strain>
    </source>
</reference>